<geneLocation type="chloroplast"/>
<feature type="chain" id="PRO_0000298314" description="Photosystem II reaction center protein I">
    <location>
        <begin position="1"/>
        <end position="36"/>
    </location>
</feature>
<feature type="transmembrane region" description="Helical" evidence="1">
    <location>
        <begin position="4"/>
        <end position="24"/>
    </location>
</feature>
<comment type="function">
    <text evidence="1">One of the components of the core complex of photosystem II (PSII), required for its stability and/or assembly. PSII is a light-driven water:plastoquinone oxidoreductase that uses light energy to abstract electrons from H(2)O, generating O(2) and a proton gradient subsequently used for ATP formation. It consists of a core antenna complex that captures photons, and an electron transfer chain that converts photonic excitation into a charge separation.</text>
</comment>
<comment type="subunit">
    <text evidence="1">PSII is composed of 1 copy each of membrane proteins PsbA, PsbB, PsbC, PsbD, PsbE, PsbF, PsbH, PsbI, PsbJ, PsbK, PsbL, PsbM, PsbT, PsbX, PsbY, PsbZ, Psb30/Ycf12, at least 3 peripheral proteins of the oxygen-evolving complex and a large number of cofactors. It forms dimeric complexes.</text>
</comment>
<comment type="subcellular location">
    <subcellularLocation>
        <location evidence="1">Plastid</location>
        <location evidence="1">Chloroplast thylakoid membrane</location>
        <topology evidence="1">Single-pass membrane protein</topology>
    </subcellularLocation>
</comment>
<comment type="similarity">
    <text evidence="1">Belongs to the PsbI family.</text>
</comment>
<reference key="1">
    <citation type="submission" date="2007-03" db="EMBL/GenBank/DDBJ databases">
        <title>Sequencing analysis of Arabis hirsuta chloroplast DNA.</title>
        <authorList>
            <person name="Hosouchi T."/>
            <person name="Tsuruoka H."/>
            <person name="Kotani H."/>
        </authorList>
    </citation>
    <scope>NUCLEOTIDE SEQUENCE [LARGE SCALE GENOMIC DNA]</scope>
</reference>
<dbReference type="EMBL" id="AP009369">
    <property type="protein sequence ID" value="BAF50007.1"/>
    <property type="molecule type" value="Genomic_DNA"/>
</dbReference>
<dbReference type="RefSeq" id="YP_001123183.1">
    <property type="nucleotide sequence ID" value="NC_009268.1"/>
</dbReference>
<dbReference type="SMR" id="A4QK02"/>
<dbReference type="GeneID" id="4962496"/>
<dbReference type="GO" id="GO:0009535">
    <property type="term" value="C:chloroplast thylakoid membrane"/>
    <property type="evidence" value="ECO:0007669"/>
    <property type="project" value="UniProtKB-SubCell"/>
</dbReference>
<dbReference type="GO" id="GO:0009539">
    <property type="term" value="C:photosystem II reaction center"/>
    <property type="evidence" value="ECO:0007669"/>
    <property type="project" value="InterPro"/>
</dbReference>
<dbReference type="GO" id="GO:0015979">
    <property type="term" value="P:photosynthesis"/>
    <property type="evidence" value="ECO:0007669"/>
    <property type="project" value="UniProtKB-UniRule"/>
</dbReference>
<dbReference type="HAMAP" id="MF_01316">
    <property type="entry name" value="PSII_PsbI"/>
    <property type="match status" value="1"/>
</dbReference>
<dbReference type="InterPro" id="IPR003686">
    <property type="entry name" value="PSII_PsbI"/>
</dbReference>
<dbReference type="InterPro" id="IPR037271">
    <property type="entry name" value="PSII_PsbI_sf"/>
</dbReference>
<dbReference type="NCBIfam" id="NF002735">
    <property type="entry name" value="PRK02655.1"/>
    <property type="match status" value="1"/>
</dbReference>
<dbReference type="PANTHER" id="PTHR35772">
    <property type="entry name" value="PHOTOSYSTEM II REACTION CENTER PROTEIN I"/>
    <property type="match status" value="1"/>
</dbReference>
<dbReference type="PANTHER" id="PTHR35772:SF1">
    <property type="entry name" value="PHOTOSYSTEM II REACTION CENTER PROTEIN I"/>
    <property type="match status" value="1"/>
</dbReference>
<dbReference type="Pfam" id="PF02532">
    <property type="entry name" value="PsbI"/>
    <property type="match status" value="1"/>
</dbReference>
<dbReference type="SUPFAM" id="SSF161041">
    <property type="entry name" value="Photosystem II reaction center protein I, PsbI"/>
    <property type="match status" value="1"/>
</dbReference>
<accession>A4QK02</accession>
<evidence type="ECO:0000255" key="1">
    <source>
        <dbReference type="HAMAP-Rule" id="MF_01316"/>
    </source>
</evidence>
<organism>
    <name type="scientific">Arabis hirsuta</name>
    <name type="common">Hairy rock-cress</name>
    <name type="synonym">Turritis hirsuta</name>
    <dbReference type="NCBI Taxonomy" id="78191"/>
    <lineage>
        <taxon>Eukaryota</taxon>
        <taxon>Viridiplantae</taxon>
        <taxon>Streptophyta</taxon>
        <taxon>Embryophyta</taxon>
        <taxon>Tracheophyta</taxon>
        <taxon>Spermatophyta</taxon>
        <taxon>Magnoliopsida</taxon>
        <taxon>eudicotyledons</taxon>
        <taxon>Gunneridae</taxon>
        <taxon>Pentapetalae</taxon>
        <taxon>rosids</taxon>
        <taxon>malvids</taxon>
        <taxon>Brassicales</taxon>
        <taxon>Brassicaceae</taxon>
        <taxon>Arabideae</taxon>
        <taxon>Arabis</taxon>
    </lineage>
</organism>
<gene>
    <name evidence="1" type="primary">psbI</name>
</gene>
<protein>
    <recommendedName>
        <fullName evidence="1">Photosystem II reaction center protein I</fullName>
        <shortName evidence="1">PSII-I</shortName>
    </recommendedName>
    <alternativeName>
        <fullName evidence="1">PSII 4.8 kDa protein</fullName>
    </alternativeName>
</protein>
<proteinExistence type="inferred from homology"/>
<sequence length="36" mass="4168">MLTLKLFVYTVVIFFVSLFIFGFLSNDPGRNPGREE</sequence>
<name>PSBI_ARAHI</name>
<keyword id="KW-0150">Chloroplast</keyword>
<keyword id="KW-0472">Membrane</keyword>
<keyword id="KW-0602">Photosynthesis</keyword>
<keyword id="KW-0604">Photosystem II</keyword>
<keyword id="KW-0934">Plastid</keyword>
<keyword id="KW-0674">Reaction center</keyword>
<keyword id="KW-0793">Thylakoid</keyword>
<keyword id="KW-0812">Transmembrane</keyword>
<keyword id="KW-1133">Transmembrane helix</keyword>